<protein>
    <recommendedName>
        <fullName evidence="1">Small ribosomal subunit protein uS9</fullName>
    </recommendedName>
    <alternativeName>
        <fullName evidence="2">30S ribosomal protein S9</fullName>
    </alternativeName>
</protein>
<accession>A1V052</accession>
<name>RS9_BURMS</name>
<comment type="similarity">
    <text evidence="1">Belongs to the universal ribosomal protein uS9 family.</text>
</comment>
<dbReference type="EMBL" id="CP000526">
    <property type="protein sequence ID" value="ABM51224.1"/>
    <property type="molecule type" value="Genomic_DNA"/>
</dbReference>
<dbReference type="RefSeq" id="WP_004194309.1">
    <property type="nucleotide sequence ID" value="NC_008785.1"/>
</dbReference>
<dbReference type="SMR" id="A1V052"/>
<dbReference type="GeneID" id="93061506"/>
<dbReference type="KEGG" id="bmv:BMASAVP1_A0254"/>
<dbReference type="HOGENOM" id="CLU_046483_2_1_4"/>
<dbReference type="GO" id="GO:0022627">
    <property type="term" value="C:cytosolic small ribosomal subunit"/>
    <property type="evidence" value="ECO:0007669"/>
    <property type="project" value="TreeGrafter"/>
</dbReference>
<dbReference type="GO" id="GO:0003723">
    <property type="term" value="F:RNA binding"/>
    <property type="evidence" value="ECO:0007669"/>
    <property type="project" value="TreeGrafter"/>
</dbReference>
<dbReference type="GO" id="GO:0003735">
    <property type="term" value="F:structural constituent of ribosome"/>
    <property type="evidence" value="ECO:0007669"/>
    <property type="project" value="InterPro"/>
</dbReference>
<dbReference type="GO" id="GO:0006412">
    <property type="term" value="P:translation"/>
    <property type="evidence" value="ECO:0007669"/>
    <property type="project" value="UniProtKB-UniRule"/>
</dbReference>
<dbReference type="FunFam" id="3.30.230.10:FF:000001">
    <property type="entry name" value="30S ribosomal protein S9"/>
    <property type="match status" value="1"/>
</dbReference>
<dbReference type="Gene3D" id="3.30.230.10">
    <property type="match status" value="1"/>
</dbReference>
<dbReference type="HAMAP" id="MF_00532_B">
    <property type="entry name" value="Ribosomal_uS9_B"/>
    <property type="match status" value="1"/>
</dbReference>
<dbReference type="InterPro" id="IPR020568">
    <property type="entry name" value="Ribosomal_Su5_D2-typ_SF"/>
</dbReference>
<dbReference type="InterPro" id="IPR000754">
    <property type="entry name" value="Ribosomal_uS9"/>
</dbReference>
<dbReference type="InterPro" id="IPR023035">
    <property type="entry name" value="Ribosomal_uS9_bac/plastid"/>
</dbReference>
<dbReference type="InterPro" id="IPR020574">
    <property type="entry name" value="Ribosomal_uS9_CS"/>
</dbReference>
<dbReference type="InterPro" id="IPR014721">
    <property type="entry name" value="Ribsml_uS5_D2-typ_fold_subgr"/>
</dbReference>
<dbReference type="NCBIfam" id="NF001099">
    <property type="entry name" value="PRK00132.1"/>
    <property type="match status" value="1"/>
</dbReference>
<dbReference type="PANTHER" id="PTHR21569">
    <property type="entry name" value="RIBOSOMAL PROTEIN S9"/>
    <property type="match status" value="1"/>
</dbReference>
<dbReference type="PANTHER" id="PTHR21569:SF1">
    <property type="entry name" value="SMALL RIBOSOMAL SUBUNIT PROTEIN US9M"/>
    <property type="match status" value="1"/>
</dbReference>
<dbReference type="Pfam" id="PF00380">
    <property type="entry name" value="Ribosomal_S9"/>
    <property type="match status" value="1"/>
</dbReference>
<dbReference type="SUPFAM" id="SSF54211">
    <property type="entry name" value="Ribosomal protein S5 domain 2-like"/>
    <property type="match status" value="1"/>
</dbReference>
<dbReference type="PROSITE" id="PS00360">
    <property type="entry name" value="RIBOSOMAL_S9"/>
    <property type="match status" value="1"/>
</dbReference>
<keyword id="KW-0687">Ribonucleoprotein</keyword>
<keyword id="KW-0689">Ribosomal protein</keyword>
<organism>
    <name type="scientific">Burkholderia mallei (strain SAVP1)</name>
    <dbReference type="NCBI Taxonomy" id="320388"/>
    <lineage>
        <taxon>Bacteria</taxon>
        <taxon>Pseudomonadati</taxon>
        <taxon>Pseudomonadota</taxon>
        <taxon>Betaproteobacteria</taxon>
        <taxon>Burkholderiales</taxon>
        <taxon>Burkholderiaceae</taxon>
        <taxon>Burkholderia</taxon>
        <taxon>pseudomallei group</taxon>
    </lineage>
</organism>
<sequence>MIGNWNYGTGRRKSAVARVFIKAGKGDIVVNGKPISDYFSRETSLMIVRQPLELTNHAQTFDIKVNVSGGGETGQAGAVRHGITRALIDYDATLKPALSNAGFVTRDAREVERKKVGLHKARRAKQFSKR</sequence>
<feature type="chain" id="PRO_1000051186" description="Small ribosomal subunit protein uS9">
    <location>
        <begin position="1"/>
        <end position="130"/>
    </location>
</feature>
<proteinExistence type="inferred from homology"/>
<gene>
    <name evidence="1" type="primary">rpsI</name>
    <name type="ordered locus">BMASAVP1_A0254</name>
</gene>
<evidence type="ECO:0000255" key="1">
    <source>
        <dbReference type="HAMAP-Rule" id="MF_00532"/>
    </source>
</evidence>
<evidence type="ECO:0000305" key="2"/>
<reference key="1">
    <citation type="journal article" date="2010" name="Genome Biol. Evol.">
        <title>Continuing evolution of Burkholderia mallei through genome reduction and large-scale rearrangements.</title>
        <authorList>
            <person name="Losada L."/>
            <person name="Ronning C.M."/>
            <person name="DeShazer D."/>
            <person name="Woods D."/>
            <person name="Fedorova N."/>
            <person name="Kim H.S."/>
            <person name="Shabalina S.A."/>
            <person name="Pearson T.R."/>
            <person name="Brinkac L."/>
            <person name="Tan P."/>
            <person name="Nandi T."/>
            <person name="Crabtree J."/>
            <person name="Badger J."/>
            <person name="Beckstrom-Sternberg S."/>
            <person name="Saqib M."/>
            <person name="Schutzer S.E."/>
            <person name="Keim P."/>
            <person name="Nierman W.C."/>
        </authorList>
    </citation>
    <scope>NUCLEOTIDE SEQUENCE [LARGE SCALE GENOMIC DNA]</scope>
    <source>
        <strain>SAVP1</strain>
    </source>
</reference>